<sequence>MSDILRKIEAYKRDEIAAAKAHVPLAEIKARAKDADAPRGFLAALEAKRRSGRFALIAEIKKASPSKGLIRADFDPPALAQAYEKGGAACLSVLTDAPSFQGAPEFLTKARAAVALPALRKDFLFDPYQVYEARAWGADAILIIMASVDDALASALEATAFELGMDALIEVHDEAETQRALKLSSRLIGINNRNLRTFETSLETSERLATMVPADRLLVSESGIFTHDDCLRLQKKDIGTFLVGESLMRQEDVTAATRILLTGKALAEVV</sequence>
<protein>
    <recommendedName>
        <fullName evidence="1">Indole-3-glycerol phosphate synthase</fullName>
        <shortName evidence="1">IGPS</shortName>
        <ecNumber evidence="1">4.1.1.48</ecNumber>
    </recommendedName>
</protein>
<evidence type="ECO:0000255" key="1">
    <source>
        <dbReference type="HAMAP-Rule" id="MF_00134"/>
    </source>
</evidence>
<keyword id="KW-0028">Amino-acid biosynthesis</keyword>
<keyword id="KW-0057">Aromatic amino acid biosynthesis</keyword>
<keyword id="KW-0210">Decarboxylase</keyword>
<keyword id="KW-0456">Lyase</keyword>
<keyword id="KW-0822">Tryptophan biosynthesis</keyword>
<reference key="1">
    <citation type="journal article" date="2000" name="DNA Res.">
        <title>Complete genome structure of the nitrogen-fixing symbiotic bacterium Mesorhizobium loti.</title>
        <authorList>
            <person name="Kaneko T."/>
            <person name="Nakamura Y."/>
            <person name="Sato S."/>
            <person name="Asamizu E."/>
            <person name="Kato T."/>
            <person name="Sasamoto S."/>
            <person name="Watanabe A."/>
            <person name="Idesawa K."/>
            <person name="Ishikawa A."/>
            <person name="Kawashima K."/>
            <person name="Kimura T."/>
            <person name="Kishida Y."/>
            <person name="Kiyokawa C."/>
            <person name="Kohara M."/>
            <person name="Matsumoto M."/>
            <person name="Matsuno A."/>
            <person name="Mochizuki Y."/>
            <person name="Nakayama S."/>
            <person name="Nakazaki N."/>
            <person name="Shimpo S."/>
            <person name="Sugimoto M."/>
            <person name="Takeuchi C."/>
            <person name="Yamada M."/>
            <person name="Tabata S."/>
        </authorList>
    </citation>
    <scope>NUCLEOTIDE SEQUENCE [LARGE SCALE GENOMIC DNA]</scope>
    <source>
        <strain>LMG 29417 / CECT 9101 / MAFF 303099</strain>
    </source>
</reference>
<feature type="chain" id="PRO_0000154244" description="Indole-3-glycerol phosphate synthase">
    <location>
        <begin position="1"/>
        <end position="270"/>
    </location>
</feature>
<dbReference type="EC" id="4.1.1.48" evidence="1"/>
<dbReference type="EMBL" id="BA000012">
    <property type="protein sequence ID" value="BAB48170.1"/>
    <property type="molecule type" value="Genomic_DNA"/>
</dbReference>
<dbReference type="RefSeq" id="WP_010909525.1">
    <property type="nucleotide sequence ID" value="NC_002678.2"/>
</dbReference>
<dbReference type="SMR" id="Q98ME3"/>
<dbReference type="KEGG" id="mlo:mlr0615"/>
<dbReference type="PATRIC" id="fig|266835.9.peg.492"/>
<dbReference type="eggNOG" id="COG0134">
    <property type="taxonomic scope" value="Bacteria"/>
</dbReference>
<dbReference type="HOGENOM" id="CLU_034247_2_0_5"/>
<dbReference type="UniPathway" id="UPA00035">
    <property type="reaction ID" value="UER00043"/>
</dbReference>
<dbReference type="Proteomes" id="UP000000552">
    <property type="component" value="Chromosome"/>
</dbReference>
<dbReference type="GO" id="GO:0004425">
    <property type="term" value="F:indole-3-glycerol-phosphate synthase activity"/>
    <property type="evidence" value="ECO:0007669"/>
    <property type="project" value="UniProtKB-UniRule"/>
</dbReference>
<dbReference type="GO" id="GO:0004640">
    <property type="term" value="F:phosphoribosylanthranilate isomerase activity"/>
    <property type="evidence" value="ECO:0007669"/>
    <property type="project" value="TreeGrafter"/>
</dbReference>
<dbReference type="GO" id="GO:0000162">
    <property type="term" value="P:L-tryptophan biosynthetic process"/>
    <property type="evidence" value="ECO:0007669"/>
    <property type="project" value="UniProtKB-UniRule"/>
</dbReference>
<dbReference type="CDD" id="cd00331">
    <property type="entry name" value="IGPS"/>
    <property type="match status" value="1"/>
</dbReference>
<dbReference type="FunFam" id="3.20.20.70:FF:000024">
    <property type="entry name" value="Indole-3-glycerol phosphate synthase"/>
    <property type="match status" value="1"/>
</dbReference>
<dbReference type="Gene3D" id="3.20.20.70">
    <property type="entry name" value="Aldolase class I"/>
    <property type="match status" value="1"/>
</dbReference>
<dbReference type="HAMAP" id="MF_00134_B">
    <property type="entry name" value="IGPS_B"/>
    <property type="match status" value="1"/>
</dbReference>
<dbReference type="InterPro" id="IPR013785">
    <property type="entry name" value="Aldolase_TIM"/>
</dbReference>
<dbReference type="InterPro" id="IPR045186">
    <property type="entry name" value="Indole-3-glycerol_P_synth"/>
</dbReference>
<dbReference type="InterPro" id="IPR013798">
    <property type="entry name" value="Indole-3-glycerol_P_synth_dom"/>
</dbReference>
<dbReference type="InterPro" id="IPR001468">
    <property type="entry name" value="Indole-3-GlycerolPSynthase_CS"/>
</dbReference>
<dbReference type="InterPro" id="IPR011060">
    <property type="entry name" value="RibuloseP-bd_barrel"/>
</dbReference>
<dbReference type="NCBIfam" id="NF001370">
    <property type="entry name" value="PRK00278.1-2"/>
    <property type="match status" value="1"/>
</dbReference>
<dbReference type="NCBIfam" id="NF001373">
    <property type="entry name" value="PRK00278.1-6"/>
    <property type="match status" value="1"/>
</dbReference>
<dbReference type="NCBIfam" id="NF001377">
    <property type="entry name" value="PRK00278.2-4"/>
    <property type="match status" value="1"/>
</dbReference>
<dbReference type="PANTHER" id="PTHR22854:SF2">
    <property type="entry name" value="INDOLE-3-GLYCEROL-PHOSPHATE SYNTHASE"/>
    <property type="match status" value="1"/>
</dbReference>
<dbReference type="PANTHER" id="PTHR22854">
    <property type="entry name" value="TRYPTOPHAN BIOSYNTHESIS PROTEIN"/>
    <property type="match status" value="1"/>
</dbReference>
<dbReference type="Pfam" id="PF00218">
    <property type="entry name" value="IGPS"/>
    <property type="match status" value="1"/>
</dbReference>
<dbReference type="SUPFAM" id="SSF51366">
    <property type="entry name" value="Ribulose-phoshate binding barrel"/>
    <property type="match status" value="1"/>
</dbReference>
<dbReference type="PROSITE" id="PS00614">
    <property type="entry name" value="IGPS"/>
    <property type="match status" value="1"/>
</dbReference>
<organism>
    <name type="scientific">Mesorhizobium japonicum (strain LMG 29417 / CECT 9101 / MAFF 303099)</name>
    <name type="common">Mesorhizobium loti (strain MAFF 303099)</name>
    <dbReference type="NCBI Taxonomy" id="266835"/>
    <lineage>
        <taxon>Bacteria</taxon>
        <taxon>Pseudomonadati</taxon>
        <taxon>Pseudomonadota</taxon>
        <taxon>Alphaproteobacteria</taxon>
        <taxon>Hyphomicrobiales</taxon>
        <taxon>Phyllobacteriaceae</taxon>
        <taxon>Mesorhizobium</taxon>
    </lineage>
</organism>
<proteinExistence type="inferred from homology"/>
<name>TRPC_RHILO</name>
<comment type="catalytic activity">
    <reaction evidence="1">
        <text>1-(2-carboxyphenylamino)-1-deoxy-D-ribulose 5-phosphate + H(+) = (1S,2R)-1-C-(indol-3-yl)glycerol 3-phosphate + CO2 + H2O</text>
        <dbReference type="Rhea" id="RHEA:23476"/>
        <dbReference type="ChEBI" id="CHEBI:15377"/>
        <dbReference type="ChEBI" id="CHEBI:15378"/>
        <dbReference type="ChEBI" id="CHEBI:16526"/>
        <dbReference type="ChEBI" id="CHEBI:58613"/>
        <dbReference type="ChEBI" id="CHEBI:58866"/>
        <dbReference type="EC" id="4.1.1.48"/>
    </reaction>
</comment>
<comment type="pathway">
    <text evidence="1">Amino-acid biosynthesis; L-tryptophan biosynthesis; L-tryptophan from chorismate: step 4/5.</text>
</comment>
<comment type="similarity">
    <text evidence="1">Belongs to the TrpC family.</text>
</comment>
<accession>Q98ME3</accession>
<gene>
    <name evidence="1" type="primary">trpC</name>
    <name type="ordered locus">mlr0615</name>
</gene>